<dbReference type="EC" id="7.1.1.-" evidence="1"/>
<dbReference type="EMBL" id="AE017197">
    <property type="protein sequence ID" value="AAU04238.1"/>
    <property type="molecule type" value="Genomic_DNA"/>
</dbReference>
<dbReference type="RefSeq" id="WP_011191213.1">
    <property type="nucleotide sequence ID" value="NC_006142.1"/>
</dbReference>
<dbReference type="SMR" id="Q68VV4"/>
<dbReference type="KEGG" id="rty:RT0782"/>
<dbReference type="eggNOG" id="COG1143">
    <property type="taxonomic scope" value="Bacteria"/>
</dbReference>
<dbReference type="HOGENOM" id="CLU_067218_5_1_5"/>
<dbReference type="OrthoDB" id="9808559at2"/>
<dbReference type="Proteomes" id="UP000000604">
    <property type="component" value="Chromosome"/>
</dbReference>
<dbReference type="GO" id="GO:0005886">
    <property type="term" value="C:plasma membrane"/>
    <property type="evidence" value="ECO:0007669"/>
    <property type="project" value="UniProtKB-SubCell"/>
</dbReference>
<dbReference type="GO" id="GO:0051539">
    <property type="term" value="F:4 iron, 4 sulfur cluster binding"/>
    <property type="evidence" value="ECO:0007669"/>
    <property type="project" value="UniProtKB-KW"/>
</dbReference>
<dbReference type="GO" id="GO:0005506">
    <property type="term" value="F:iron ion binding"/>
    <property type="evidence" value="ECO:0007669"/>
    <property type="project" value="UniProtKB-UniRule"/>
</dbReference>
<dbReference type="GO" id="GO:0050136">
    <property type="term" value="F:NADH:ubiquinone reductase (non-electrogenic) activity"/>
    <property type="evidence" value="ECO:0007669"/>
    <property type="project" value="UniProtKB-UniRule"/>
</dbReference>
<dbReference type="GO" id="GO:0048038">
    <property type="term" value="F:quinone binding"/>
    <property type="evidence" value="ECO:0007669"/>
    <property type="project" value="UniProtKB-KW"/>
</dbReference>
<dbReference type="GO" id="GO:0009060">
    <property type="term" value="P:aerobic respiration"/>
    <property type="evidence" value="ECO:0007669"/>
    <property type="project" value="TreeGrafter"/>
</dbReference>
<dbReference type="FunFam" id="3.30.70.3270:FF:000001">
    <property type="entry name" value="NADH-quinone oxidoreductase subunit I 1"/>
    <property type="match status" value="1"/>
</dbReference>
<dbReference type="Gene3D" id="3.30.70.3270">
    <property type="match status" value="1"/>
</dbReference>
<dbReference type="HAMAP" id="MF_01351">
    <property type="entry name" value="NDH1_NuoI"/>
    <property type="match status" value="1"/>
</dbReference>
<dbReference type="InterPro" id="IPR017896">
    <property type="entry name" value="4Fe4S_Fe-S-bd"/>
</dbReference>
<dbReference type="InterPro" id="IPR017900">
    <property type="entry name" value="4Fe4S_Fe_S_CS"/>
</dbReference>
<dbReference type="InterPro" id="IPR010226">
    <property type="entry name" value="NADH_quinone_OxRdtase_chainI"/>
</dbReference>
<dbReference type="NCBIfam" id="TIGR01971">
    <property type="entry name" value="NuoI"/>
    <property type="match status" value="1"/>
</dbReference>
<dbReference type="NCBIfam" id="NF004538">
    <property type="entry name" value="PRK05888.1-4"/>
    <property type="match status" value="1"/>
</dbReference>
<dbReference type="NCBIfam" id="NF004539">
    <property type="entry name" value="PRK05888.1-5"/>
    <property type="match status" value="1"/>
</dbReference>
<dbReference type="PANTHER" id="PTHR10849:SF20">
    <property type="entry name" value="NADH DEHYDROGENASE [UBIQUINONE] IRON-SULFUR PROTEIN 8, MITOCHONDRIAL"/>
    <property type="match status" value="1"/>
</dbReference>
<dbReference type="PANTHER" id="PTHR10849">
    <property type="entry name" value="NADH DEHYDROGENASE UBIQUINONE IRON-SULFUR PROTEIN 8, MITOCHONDRIAL"/>
    <property type="match status" value="1"/>
</dbReference>
<dbReference type="Pfam" id="PF12838">
    <property type="entry name" value="Fer4_7"/>
    <property type="match status" value="1"/>
</dbReference>
<dbReference type="SUPFAM" id="SSF54862">
    <property type="entry name" value="4Fe-4S ferredoxins"/>
    <property type="match status" value="1"/>
</dbReference>
<dbReference type="PROSITE" id="PS00198">
    <property type="entry name" value="4FE4S_FER_1"/>
    <property type="match status" value="2"/>
</dbReference>
<dbReference type="PROSITE" id="PS51379">
    <property type="entry name" value="4FE4S_FER_2"/>
    <property type="match status" value="2"/>
</dbReference>
<organism>
    <name type="scientific">Rickettsia typhi (strain ATCC VR-144 / Wilmington)</name>
    <dbReference type="NCBI Taxonomy" id="257363"/>
    <lineage>
        <taxon>Bacteria</taxon>
        <taxon>Pseudomonadati</taxon>
        <taxon>Pseudomonadota</taxon>
        <taxon>Alphaproteobacteria</taxon>
        <taxon>Rickettsiales</taxon>
        <taxon>Rickettsiaceae</taxon>
        <taxon>Rickettsieae</taxon>
        <taxon>Rickettsia</taxon>
        <taxon>typhus group</taxon>
    </lineage>
</organism>
<keyword id="KW-0004">4Fe-4S</keyword>
<keyword id="KW-0997">Cell inner membrane</keyword>
<keyword id="KW-1003">Cell membrane</keyword>
<keyword id="KW-0408">Iron</keyword>
<keyword id="KW-0411">Iron-sulfur</keyword>
<keyword id="KW-0472">Membrane</keyword>
<keyword id="KW-0479">Metal-binding</keyword>
<keyword id="KW-0520">NAD</keyword>
<keyword id="KW-0874">Quinone</keyword>
<keyword id="KW-0677">Repeat</keyword>
<keyword id="KW-1278">Translocase</keyword>
<keyword id="KW-0830">Ubiquinone</keyword>
<protein>
    <recommendedName>
        <fullName evidence="1">NADH-quinone oxidoreductase subunit I</fullName>
        <ecNumber evidence="1">7.1.1.-</ecNumber>
    </recommendedName>
    <alternativeName>
        <fullName evidence="1">NADH dehydrogenase I subunit I</fullName>
    </alternativeName>
    <alternativeName>
        <fullName evidence="1">NDH-1 subunit I</fullName>
    </alternativeName>
</protein>
<accession>Q68VV4</accession>
<comment type="function">
    <text evidence="1">NDH-1 shuttles electrons from NADH, via FMN and iron-sulfur (Fe-S) centers, to quinones in the respiratory chain. The immediate electron acceptor for the enzyme in this species is believed to be ubiquinone. Couples the redox reaction to proton translocation (for every two electrons transferred, four hydrogen ions are translocated across the cytoplasmic membrane), and thus conserves the redox energy in a proton gradient.</text>
</comment>
<comment type="catalytic activity">
    <reaction evidence="1">
        <text>a quinone + NADH + 5 H(+)(in) = a quinol + NAD(+) + 4 H(+)(out)</text>
        <dbReference type="Rhea" id="RHEA:57888"/>
        <dbReference type="ChEBI" id="CHEBI:15378"/>
        <dbReference type="ChEBI" id="CHEBI:24646"/>
        <dbReference type="ChEBI" id="CHEBI:57540"/>
        <dbReference type="ChEBI" id="CHEBI:57945"/>
        <dbReference type="ChEBI" id="CHEBI:132124"/>
    </reaction>
</comment>
<comment type="cofactor">
    <cofactor evidence="1">
        <name>[4Fe-4S] cluster</name>
        <dbReference type="ChEBI" id="CHEBI:49883"/>
    </cofactor>
    <text evidence="1">Binds 2 [4Fe-4S] clusters per subunit.</text>
</comment>
<comment type="subunit">
    <text evidence="1">NDH-1 is composed of 14 different subunits. Subunits NuoA, H, J, K, L, M, N constitute the membrane sector of the complex.</text>
</comment>
<comment type="subcellular location">
    <subcellularLocation>
        <location evidence="1">Cell inner membrane</location>
        <topology evidence="1">Peripheral membrane protein</topology>
    </subcellularLocation>
</comment>
<comment type="similarity">
    <text evidence="1">Belongs to the complex I 23 kDa subunit family.</text>
</comment>
<sequence length="159" mass="18678">MINYLKSFFLYEIVRGLTLTLKYFFKPKVTINYPYEKSPVSPRFKGEHALRRYENGEERCIACKLCEAVCPAQAIVIESDERDDGSRRTTRYDIDMTKCIYCGLCQEACPVDAIVEGPNFEFASLTHTALIYDKERLLYNGDKWEQELTNKLHKDYQYR</sequence>
<reference key="1">
    <citation type="journal article" date="2004" name="J. Bacteriol.">
        <title>Complete genome sequence of Rickettsia typhi and comparison with sequences of other Rickettsiae.</title>
        <authorList>
            <person name="McLeod M.P."/>
            <person name="Qin X."/>
            <person name="Karpathy S.E."/>
            <person name="Gioia J."/>
            <person name="Highlander S.K."/>
            <person name="Fox G.E."/>
            <person name="McNeill T.Z."/>
            <person name="Jiang H."/>
            <person name="Muzny D."/>
            <person name="Jacob L.S."/>
            <person name="Hawes A.C."/>
            <person name="Sodergren E."/>
            <person name="Gill R."/>
            <person name="Hume J."/>
            <person name="Morgan M."/>
            <person name="Fan G."/>
            <person name="Amin A.G."/>
            <person name="Gibbs R.A."/>
            <person name="Hong C."/>
            <person name="Yu X.-J."/>
            <person name="Walker D.H."/>
            <person name="Weinstock G.M."/>
        </authorList>
    </citation>
    <scope>NUCLEOTIDE SEQUENCE [LARGE SCALE GENOMIC DNA]</scope>
    <source>
        <strain>ATCC VR-144 / Wilmington</strain>
    </source>
</reference>
<name>NUOI_RICTY</name>
<gene>
    <name evidence="1" type="primary">nuoI</name>
    <name type="ordered locus">RT0782</name>
</gene>
<feature type="chain" id="PRO_0000245738" description="NADH-quinone oxidoreductase subunit I">
    <location>
        <begin position="1"/>
        <end position="159"/>
    </location>
</feature>
<feature type="domain" description="4Fe-4S ferredoxin-type 1" evidence="1">
    <location>
        <begin position="51"/>
        <end position="80"/>
    </location>
</feature>
<feature type="domain" description="4Fe-4S ferredoxin-type 2" evidence="1">
    <location>
        <begin position="90"/>
        <end position="119"/>
    </location>
</feature>
<feature type="binding site" evidence="1">
    <location>
        <position position="60"/>
    </location>
    <ligand>
        <name>[4Fe-4S] cluster</name>
        <dbReference type="ChEBI" id="CHEBI:49883"/>
        <label>1</label>
    </ligand>
</feature>
<feature type="binding site" evidence="1">
    <location>
        <position position="63"/>
    </location>
    <ligand>
        <name>[4Fe-4S] cluster</name>
        <dbReference type="ChEBI" id="CHEBI:49883"/>
        <label>1</label>
    </ligand>
</feature>
<feature type="binding site" evidence="1">
    <location>
        <position position="66"/>
    </location>
    <ligand>
        <name>[4Fe-4S] cluster</name>
        <dbReference type="ChEBI" id="CHEBI:49883"/>
        <label>1</label>
    </ligand>
</feature>
<feature type="binding site" evidence="1">
    <location>
        <position position="70"/>
    </location>
    <ligand>
        <name>[4Fe-4S] cluster</name>
        <dbReference type="ChEBI" id="CHEBI:49883"/>
        <label>2</label>
    </ligand>
</feature>
<feature type="binding site" evidence="1">
    <location>
        <position position="99"/>
    </location>
    <ligand>
        <name>[4Fe-4S] cluster</name>
        <dbReference type="ChEBI" id="CHEBI:49883"/>
        <label>2</label>
    </ligand>
</feature>
<feature type="binding site" evidence="1">
    <location>
        <position position="102"/>
    </location>
    <ligand>
        <name>[4Fe-4S] cluster</name>
        <dbReference type="ChEBI" id="CHEBI:49883"/>
        <label>2</label>
    </ligand>
</feature>
<feature type="binding site" evidence="1">
    <location>
        <position position="105"/>
    </location>
    <ligand>
        <name>[4Fe-4S] cluster</name>
        <dbReference type="ChEBI" id="CHEBI:49883"/>
        <label>2</label>
    </ligand>
</feature>
<feature type="binding site" evidence="1">
    <location>
        <position position="109"/>
    </location>
    <ligand>
        <name>[4Fe-4S] cluster</name>
        <dbReference type="ChEBI" id="CHEBI:49883"/>
        <label>1</label>
    </ligand>
</feature>
<proteinExistence type="inferred from homology"/>
<evidence type="ECO:0000255" key="1">
    <source>
        <dbReference type="HAMAP-Rule" id="MF_01351"/>
    </source>
</evidence>